<sequence length="210" mass="22868">MADTKEMKKVLFGPILDNNPIALQILGVCSALAVTTKLETALVMSLALTAVTAFSNLFISMIRSQIPSSVRIIVQMTIIASLVIVVDQILKAYSYEISKQLSVFVGLIITNCIVMGRAEAFAMKSPPFISFLDGIGNGLGYSFVLIVIGTIKELFGFGTILGFEILPLIQNGGWYQGNGLLILPFSSFFLIGGLIWFIRTIKPEQVEPKE</sequence>
<feature type="chain" id="PRO_1000060159" description="Na(+)-translocating NADH-quinone reductase subunit D">
    <location>
        <begin position="1"/>
        <end position="210"/>
    </location>
</feature>
<feature type="transmembrane region" description="Helical" evidence="1">
    <location>
        <begin position="10"/>
        <end position="30"/>
    </location>
</feature>
<feature type="transmembrane region" description="Helical" evidence="1">
    <location>
        <begin position="42"/>
        <end position="62"/>
    </location>
</feature>
<feature type="transmembrane region" description="Helical" evidence="1">
    <location>
        <begin position="72"/>
        <end position="92"/>
    </location>
</feature>
<feature type="transmembrane region" description="Helical" evidence="1">
    <location>
        <begin position="103"/>
        <end position="123"/>
    </location>
</feature>
<feature type="transmembrane region" description="Helical" evidence="1">
    <location>
        <begin position="143"/>
        <end position="163"/>
    </location>
</feature>
<feature type="transmembrane region" description="Helical" evidence="1">
    <location>
        <begin position="178"/>
        <end position="198"/>
    </location>
</feature>
<reference key="1">
    <citation type="submission" date="2006-06" db="EMBL/GenBank/DDBJ databases">
        <title>Complete sequence of Pseudoalteromonas atlantica T6c.</title>
        <authorList>
            <consortium name="US DOE Joint Genome Institute"/>
            <person name="Copeland A."/>
            <person name="Lucas S."/>
            <person name="Lapidus A."/>
            <person name="Barry K."/>
            <person name="Detter J.C."/>
            <person name="Glavina del Rio T."/>
            <person name="Hammon N."/>
            <person name="Israni S."/>
            <person name="Dalin E."/>
            <person name="Tice H."/>
            <person name="Pitluck S."/>
            <person name="Saunders E."/>
            <person name="Brettin T."/>
            <person name="Bruce D."/>
            <person name="Han C."/>
            <person name="Tapia R."/>
            <person name="Gilna P."/>
            <person name="Schmutz J."/>
            <person name="Larimer F."/>
            <person name="Land M."/>
            <person name="Hauser L."/>
            <person name="Kyrpides N."/>
            <person name="Kim E."/>
            <person name="Karls A.C."/>
            <person name="Bartlett D."/>
            <person name="Higgins B.P."/>
            <person name="Richardson P."/>
        </authorList>
    </citation>
    <scope>NUCLEOTIDE SEQUENCE [LARGE SCALE GENOMIC DNA]</scope>
    <source>
        <strain>T6c / ATCC BAA-1087</strain>
    </source>
</reference>
<dbReference type="EC" id="7.2.1.1" evidence="1"/>
<dbReference type="EMBL" id="CP000388">
    <property type="protein sequence ID" value="ABG38985.1"/>
    <property type="molecule type" value="Genomic_DNA"/>
</dbReference>
<dbReference type="RefSeq" id="WP_006992653.1">
    <property type="nucleotide sequence ID" value="NC_008228.1"/>
</dbReference>
<dbReference type="SMR" id="Q15YQ3"/>
<dbReference type="STRING" id="342610.Patl_0455"/>
<dbReference type="KEGG" id="pat:Patl_0455"/>
<dbReference type="eggNOG" id="COG1347">
    <property type="taxonomic scope" value="Bacteria"/>
</dbReference>
<dbReference type="HOGENOM" id="CLU_046659_1_1_6"/>
<dbReference type="OrthoDB" id="9782945at2"/>
<dbReference type="Proteomes" id="UP000001981">
    <property type="component" value="Chromosome"/>
</dbReference>
<dbReference type="GO" id="GO:0005886">
    <property type="term" value="C:plasma membrane"/>
    <property type="evidence" value="ECO:0007669"/>
    <property type="project" value="UniProtKB-SubCell"/>
</dbReference>
<dbReference type="GO" id="GO:0016655">
    <property type="term" value="F:oxidoreductase activity, acting on NAD(P)H, quinone or similar compound as acceptor"/>
    <property type="evidence" value="ECO:0007669"/>
    <property type="project" value="UniProtKB-UniRule"/>
</dbReference>
<dbReference type="GO" id="GO:0006814">
    <property type="term" value="P:sodium ion transport"/>
    <property type="evidence" value="ECO:0007669"/>
    <property type="project" value="UniProtKB-UniRule"/>
</dbReference>
<dbReference type="HAMAP" id="MF_00428">
    <property type="entry name" value="NqrD"/>
    <property type="match status" value="1"/>
</dbReference>
<dbReference type="InterPro" id="IPR011292">
    <property type="entry name" value="NqrD"/>
</dbReference>
<dbReference type="InterPro" id="IPR003667">
    <property type="entry name" value="NqrDE/RnfAE"/>
</dbReference>
<dbReference type="NCBIfam" id="TIGR01939">
    <property type="entry name" value="nqrD"/>
    <property type="match status" value="1"/>
</dbReference>
<dbReference type="NCBIfam" id="NF006777">
    <property type="entry name" value="PRK09292.1"/>
    <property type="match status" value="1"/>
</dbReference>
<dbReference type="PANTHER" id="PTHR30586">
    <property type="entry name" value="ELECTRON TRANSPORT COMPLEX PROTEIN RNFE"/>
    <property type="match status" value="1"/>
</dbReference>
<dbReference type="PANTHER" id="PTHR30586:SF1">
    <property type="entry name" value="NA(+)-TRANSLOCATING NADH-QUINONE REDUCTASE SUBUNIT D"/>
    <property type="match status" value="1"/>
</dbReference>
<dbReference type="Pfam" id="PF02508">
    <property type="entry name" value="Rnf-Nqr"/>
    <property type="match status" value="1"/>
</dbReference>
<dbReference type="PIRSF" id="PIRSF006102">
    <property type="entry name" value="NQR_DE"/>
    <property type="match status" value="1"/>
</dbReference>
<proteinExistence type="inferred from homology"/>
<accession>Q15YQ3</accession>
<protein>
    <recommendedName>
        <fullName evidence="1">Na(+)-translocating NADH-quinone reductase subunit D</fullName>
        <shortName evidence="1">Na(+)-NQR subunit D</shortName>
        <shortName evidence="1">Na(+)-translocating NQR subunit D</shortName>
        <ecNumber evidence="1">7.2.1.1</ecNumber>
    </recommendedName>
    <alternativeName>
        <fullName evidence="1">NQR complex subunit D</fullName>
    </alternativeName>
    <alternativeName>
        <fullName evidence="1">NQR-1 subunit D</fullName>
    </alternativeName>
</protein>
<evidence type="ECO:0000255" key="1">
    <source>
        <dbReference type="HAMAP-Rule" id="MF_00428"/>
    </source>
</evidence>
<comment type="function">
    <text evidence="1">NQR complex catalyzes the reduction of ubiquinone-1 to ubiquinol by two successive reactions, coupled with the transport of Na(+) ions from the cytoplasm to the periplasm. NqrA to NqrE are probably involved in the second step, the conversion of ubisemiquinone to ubiquinol.</text>
</comment>
<comment type="catalytic activity">
    <reaction evidence="1">
        <text>a ubiquinone + n Na(+)(in) + NADH + H(+) = a ubiquinol + n Na(+)(out) + NAD(+)</text>
        <dbReference type="Rhea" id="RHEA:47748"/>
        <dbReference type="Rhea" id="RHEA-COMP:9565"/>
        <dbReference type="Rhea" id="RHEA-COMP:9566"/>
        <dbReference type="ChEBI" id="CHEBI:15378"/>
        <dbReference type="ChEBI" id="CHEBI:16389"/>
        <dbReference type="ChEBI" id="CHEBI:17976"/>
        <dbReference type="ChEBI" id="CHEBI:29101"/>
        <dbReference type="ChEBI" id="CHEBI:57540"/>
        <dbReference type="ChEBI" id="CHEBI:57945"/>
        <dbReference type="EC" id="7.2.1.1"/>
    </reaction>
</comment>
<comment type="subunit">
    <text evidence="1">Composed of six subunits; NqrA, NqrB, NqrC, NqrD, NqrE and NqrF.</text>
</comment>
<comment type="subcellular location">
    <subcellularLocation>
        <location evidence="1">Cell inner membrane</location>
        <topology evidence="1">Multi-pass membrane protein</topology>
    </subcellularLocation>
</comment>
<comment type="similarity">
    <text evidence="1">Belongs to the NqrDE/RnfAE family.</text>
</comment>
<organism>
    <name type="scientific">Pseudoalteromonas atlantica (strain T6c / ATCC BAA-1087)</name>
    <dbReference type="NCBI Taxonomy" id="3042615"/>
    <lineage>
        <taxon>Bacteria</taxon>
        <taxon>Pseudomonadati</taxon>
        <taxon>Pseudomonadota</taxon>
        <taxon>Gammaproteobacteria</taxon>
        <taxon>Alteromonadales</taxon>
        <taxon>Alteromonadaceae</taxon>
        <taxon>Paraglaciecola</taxon>
    </lineage>
</organism>
<keyword id="KW-0997">Cell inner membrane</keyword>
<keyword id="KW-1003">Cell membrane</keyword>
<keyword id="KW-0406">Ion transport</keyword>
<keyword id="KW-0472">Membrane</keyword>
<keyword id="KW-0520">NAD</keyword>
<keyword id="KW-0915">Sodium</keyword>
<keyword id="KW-0739">Sodium transport</keyword>
<keyword id="KW-1278">Translocase</keyword>
<keyword id="KW-0812">Transmembrane</keyword>
<keyword id="KW-1133">Transmembrane helix</keyword>
<keyword id="KW-0813">Transport</keyword>
<keyword id="KW-0830">Ubiquinone</keyword>
<name>NQRD_PSEA6</name>
<gene>
    <name evidence="1" type="primary">nqrD</name>
    <name type="ordered locus">Patl_0455</name>
</gene>